<accession>Q87L06</accession>
<gene>
    <name evidence="1" type="primary">miaA</name>
    <name type="ordered locus">VP2818</name>
</gene>
<reference key="1">
    <citation type="journal article" date="2003" name="Lancet">
        <title>Genome sequence of Vibrio parahaemolyticus: a pathogenic mechanism distinct from that of V. cholerae.</title>
        <authorList>
            <person name="Makino K."/>
            <person name="Oshima K."/>
            <person name="Kurokawa K."/>
            <person name="Yokoyama K."/>
            <person name="Uda T."/>
            <person name="Tagomori K."/>
            <person name="Iijima Y."/>
            <person name="Najima M."/>
            <person name="Nakano M."/>
            <person name="Yamashita A."/>
            <person name="Kubota Y."/>
            <person name="Kimura S."/>
            <person name="Yasunaga T."/>
            <person name="Honda T."/>
            <person name="Shinagawa H."/>
            <person name="Hattori M."/>
            <person name="Iida T."/>
        </authorList>
    </citation>
    <scope>NUCLEOTIDE SEQUENCE [LARGE SCALE GENOMIC DNA]</scope>
    <source>
        <strain>RIMD 2210633</strain>
    </source>
</reference>
<name>MIAA_VIBPA</name>
<proteinExistence type="inferred from homology"/>
<evidence type="ECO:0000255" key="1">
    <source>
        <dbReference type="HAMAP-Rule" id="MF_00185"/>
    </source>
</evidence>
<organism>
    <name type="scientific">Vibrio parahaemolyticus serotype O3:K6 (strain RIMD 2210633)</name>
    <dbReference type="NCBI Taxonomy" id="223926"/>
    <lineage>
        <taxon>Bacteria</taxon>
        <taxon>Pseudomonadati</taxon>
        <taxon>Pseudomonadota</taxon>
        <taxon>Gammaproteobacteria</taxon>
        <taxon>Vibrionales</taxon>
        <taxon>Vibrionaceae</taxon>
        <taxon>Vibrio</taxon>
    </lineage>
</organism>
<keyword id="KW-0067">ATP-binding</keyword>
<keyword id="KW-0460">Magnesium</keyword>
<keyword id="KW-0547">Nucleotide-binding</keyword>
<keyword id="KW-0808">Transferase</keyword>
<keyword id="KW-0819">tRNA processing</keyword>
<comment type="function">
    <text evidence="1">Catalyzes the transfer of a dimethylallyl group onto the adenine at position 37 in tRNAs that read codons beginning with uridine, leading to the formation of N6-(dimethylallyl)adenosine (i(6)A).</text>
</comment>
<comment type="catalytic activity">
    <reaction evidence="1">
        <text>adenosine(37) in tRNA + dimethylallyl diphosphate = N(6)-dimethylallyladenosine(37) in tRNA + diphosphate</text>
        <dbReference type="Rhea" id="RHEA:26482"/>
        <dbReference type="Rhea" id="RHEA-COMP:10162"/>
        <dbReference type="Rhea" id="RHEA-COMP:10375"/>
        <dbReference type="ChEBI" id="CHEBI:33019"/>
        <dbReference type="ChEBI" id="CHEBI:57623"/>
        <dbReference type="ChEBI" id="CHEBI:74411"/>
        <dbReference type="ChEBI" id="CHEBI:74415"/>
        <dbReference type="EC" id="2.5.1.75"/>
    </reaction>
</comment>
<comment type="cofactor">
    <cofactor evidence="1">
        <name>Mg(2+)</name>
        <dbReference type="ChEBI" id="CHEBI:18420"/>
    </cofactor>
</comment>
<comment type="subunit">
    <text evidence="1">Monomer.</text>
</comment>
<comment type="similarity">
    <text evidence="1">Belongs to the IPP transferase family.</text>
</comment>
<protein>
    <recommendedName>
        <fullName evidence="1">tRNA dimethylallyltransferase</fullName>
        <ecNumber evidence="1">2.5.1.75</ecNumber>
    </recommendedName>
    <alternativeName>
        <fullName evidence="1">Dimethylallyl diphosphate:tRNA dimethylallyltransferase</fullName>
        <shortName evidence="1">DMAPP:tRNA dimethylallyltransferase</shortName>
        <shortName evidence="1">DMATase</shortName>
    </alternativeName>
    <alternativeName>
        <fullName evidence="1">Isopentenyl-diphosphate:tRNA isopentenyltransferase</fullName>
        <shortName evidence="1">IPP transferase</shortName>
        <shortName evidence="1">IPPT</shortName>
        <shortName evidence="1">IPTase</shortName>
    </alternativeName>
</protein>
<sequence>MTDKLPLALFLMGPTASGKTELAIRLRQKFPVEIISVDSALIYKGMDIGTAKPDERELSLAPHRLIDILDPSESYSAADFRRDALQAMDDIVAEGKIPLLVGGTMLYYKALLEGLSPLPAANPEIRQQIEQEALTKGWSVLHDELKEIDPVSAARIHPNDPQRLSRALEVYRISGKTLTELTQTKGESLPYRVKQFAIAPKDRAELHRRIELRFDKMMEAGFEEEMKALYARKDLHPDLPSIRCVGYRQMWEYLDGECTRDEAVFRGVCATRQLAKRQITWLRSWDDLTWLDSDNIEQALETMSEAIASD</sequence>
<feature type="chain" id="PRO_0000164003" description="tRNA dimethylallyltransferase">
    <location>
        <begin position="1"/>
        <end position="310"/>
    </location>
</feature>
<feature type="region of interest" description="Interaction with substrate tRNA" evidence="1">
    <location>
        <begin position="38"/>
        <end position="41"/>
    </location>
</feature>
<feature type="region of interest" description="Interaction with substrate tRNA" evidence="1">
    <location>
        <begin position="162"/>
        <end position="166"/>
    </location>
</feature>
<feature type="region of interest" description="Interaction with substrate tRNA" evidence="1">
    <location>
        <begin position="243"/>
        <end position="248"/>
    </location>
</feature>
<feature type="region of interest" description="Interaction with substrate tRNA" evidence="1">
    <location>
        <begin position="276"/>
        <end position="283"/>
    </location>
</feature>
<feature type="binding site" evidence="1">
    <location>
        <begin position="13"/>
        <end position="20"/>
    </location>
    <ligand>
        <name>ATP</name>
        <dbReference type="ChEBI" id="CHEBI:30616"/>
    </ligand>
</feature>
<feature type="binding site" evidence="1">
    <location>
        <begin position="15"/>
        <end position="20"/>
    </location>
    <ligand>
        <name>substrate</name>
    </ligand>
</feature>
<feature type="site" description="Interaction with substrate tRNA" evidence="1">
    <location>
        <position position="104"/>
    </location>
</feature>
<feature type="site" description="Interaction with substrate tRNA" evidence="1">
    <location>
        <position position="126"/>
    </location>
</feature>
<dbReference type="EC" id="2.5.1.75" evidence="1"/>
<dbReference type="EMBL" id="BA000031">
    <property type="protein sequence ID" value="BAC61081.1"/>
    <property type="molecule type" value="Genomic_DNA"/>
</dbReference>
<dbReference type="RefSeq" id="NP_799197.1">
    <property type="nucleotide sequence ID" value="NC_004603.1"/>
</dbReference>
<dbReference type="RefSeq" id="WP_005480058.1">
    <property type="nucleotide sequence ID" value="NC_004603.1"/>
</dbReference>
<dbReference type="SMR" id="Q87L06"/>
<dbReference type="GeneID" id="1190368"/>
<dbReference type="KEGG" id="vpa:VP2818"/>
<dbReference type="PATRIC" id="fig|223926.6.peg.2709"/>
<dbReference type="eggNOG" id="COG0324">
    <property type="taxonomic scope" value="Bacteria"/>
</dbReference>
<dbReference type="HOGENOM" id="CLU_032616_0_0_6"/>
<dbReference type="Proteomes" id="UP000002493">
    <property type="component" value="Chromosome 1"/>
</dbReference>
<dbReference type="GO" id="GO:0005524">
    <property type="term" value="F:ATP binding"/>
    <property type="evidence" value="ECO:0007669"/>
    <property type="project" value="UniProtKB-UniRule"/>
</dbReference>
<dbReference type="GO" id="GO:0052381">
    <property type="term" value="F:tRNA dimethylallyltransferase activity"/>
    <property type="evidence" value="ECO:0007669"/>
    <property type="project" value="UniProtKB-UniRule"/>
</dbReference>
<dbReference type="GO" id="GO:0006400">
    <property type="term" value="P:tRNA modification"/>
    <property type="evidence" value="ECO:0007669"/>
    <property type="project" value="TreeGrafter"/>
</dbReference>
<dbReference type="FunFam" id="1.10.20.140:FF:000001">
    <property type="entry name" value="tRNA dimethylallyltransferase"/>
    <property type="match status" value="1"/>
</dbReference>
<dbReference type="Gene3D" id="1.10.20.140">
    <property type="match status" value="1"/>
</dbReference>
<dbReference type="Gene3D" id="3.40.50.300">
    <property type="entry name" value="P-loop containing nucleotide triphosphate hydrolases"/>
    <property type="match status" value="1"/>
</dbReference>
<dbReference type="HAMAP" id="MF_00185">
    <property type="entry name" value="IPP_trans"/>
    <property type="match status" value="1"/>
</dbReference>
<dbReference type="InterPro" id="IPR039657">
    <property type="entry name" value="Dimethylallyltransferase"/>
</dbReference>
<dbReference type="InterPro" id="IPR018022">
    <property type="entry name" value="IPT"/>
</dbReference>
<dbReference type="InterPro" id="IPR027417">
    <property type="entry name" value="P-loop_NTPase"/>
</dbReference>
<dbReference type="NCBIfam" id="TIGR00174">
    <property type="entry name" value="miaA"/>
    <property type="match status" value="1"/>
</dbReference>
<dbReference type="PANTHER" id="PTHR11088">
    <property type="entry name" value="TRNA DIMETHYLALLYLTRANSFERASE"/>
    <property type="match status" value="1"/>
</dbReference>
<dbReference type="PANTHER" id="PTHR11088:SF60">
    <property type="entry name" value="TRNA DIMETHYLALLYLTRANSFERASE"/>
    <property type="match status" value="1"/>
</dbReference>
<dbReference type="Pfam" id="PF01715">
    <property type="entry name" value="IPPT"/>
    <property type="match status" value="1"/>
</dbReference>
<dbReference type="SUPFAM" id="SSF52540">
    <property type="entry name" value="P-loop containing nucleoside triphosphate hydrolases"/>
    <property type="match status" value="1"/>
</dbReference>